<feature type="chain" id="PRO_1000011035" description="N-acetyl-gamma-glutamyl-phosphate reductase">
    <location>
        <begin position="1"/>
        <end position="351"/>
    </location>
</feature>
<feature type="active site" evidence="1">
    <location>
        <position position="154"/>
    </location>
</feature>
<proteinExistence type="inferred from homology"/>
<sequence>MNVAIVGATGYGGIQAVNLLKKIKKYKISFLGGNKTSGSKWNENFPFIYLDNDPYIEEISVDNISKNADVALLCLPNGLSSTLTRKLLDRGLKVIDLSADYRYKSLDEWKNVYSKEAAIYKRNDDDLCKEAVYGLPEINKEAISKGRLIACPGCYPTSALIPLVPYLSQGIIENEGIVIDSKSGTSGGGREPNQKLLLSECGEGLSAYGLINHRHTSEIEQVASLISGNKIELLFTPHLVPISRGMHSTIYGRLRDPGLTSDDCRILLDNYYRNFKNIKVLPVDTFPSTKWVKNTNQIFLSVKVDIRNGRIIILSAIDNLLKGQTGQAIQNLNLMSGFSMDEGLDLTNNFP</sequence>
<evidence type="ECO:0000255" key="1">
    <source>
        <dbReference type="HAMAP-Rule" id="MF_00150"/>
    </source>
</evidence>
<name>ARGC_PROMS</name>
<protein>
    <recommendedName>
        <fullName evidence="1">N-acetyl-gamma-glutamyl-phosphate reductase</fullName>
        <shortName evidence="1">AGPR</shortName>
        <ecNumber evidence="1">1.2.1.38</ecNumber>
    </recommendedName>
    <alternativeName>
        <fullName evidence="1">N-acetyl-glutamate semialdehyde dehydrogenase</fullName>
        <shortName evidence="1">NAGSA dehydrogenase</shortName>
    </alternativeName>
</protein>
<comment type="function">
    <text evidence="1">Catalyzes the NADPH-dependent reduction of N-acetyl-5-glutamyl phosphate to yield N-acetyl-L-glutamate 5-semialdehyde.</text>
</comment>
<comment type="catalytic activity">
    <reaction evidence="1">
        <text>N-acetyl-L-glutamate 5-semialdehyde + phosphate + NADP(+) = N-acetyl-L-glutamyl 5-phosphate + NADPH + H(+)</text>
        <dbReference type="Rhea" id="RHEA:21588"/>
        <dbReference type="ChEBI" id="CHEBI:15378"/>
        <dbReference type="ChEBI" id="CHEBI:29123"/>
        <dbReference type="ChEBI" id="CHEBI:43474"/>
        <dbReference type="ChEBI" id="CHEBI:57783"/>
        <dbReference type="ChEBI" id="CHEBI:57936"/>
        <dbReference type="ChEBI" id="CHEBI:58349"/>
        <dbReference type="EC" id="1.2.1.38"/>
    </reaction>
</comment>
<comment type="pathway">
    <text evidence="1">Amino-acid biosynthesis; L-arginine biosynthesis; N(2)-acetyl-L-ornithine from L-glutamate: step 3/4.</text>
</comment>
<comment type="subcellular location">
    <subcellularLocation>
        <location evidence="1">Cytoplasm</location>
    </subcellularLocation>
</comment>
<comment type="similarity">
    <text evidence="1">Belongs to the NAGSA dehydrogenase family. Type 1 subfamily.</text>
</comment>
<keyword id="KW-0028">Amino-acid biosynthesis</keyword>
<keyword id="KW-0055">Arginine biosynthesis</keyword>
<keyword id="KW-0963">Cytoplasm</keyword>
<keyword id="KW-0521">NADP</keyword>
<keyword id="KW-0560">Oxidoreductase</keyword>
<gene>
    <name evidence="1" type="primary">argC</name>
    <name type="ordered locus">A9601_09691</name>
</gene>
<reference key="1">
    <citation type="journal article" date="2007" name="PLoS Genet.">
        <title>Patterns and implications of gene gain and loss in the evolution of Prochlorococcus.</title>
        <authorList>
            <person name="Kettler G.C."/>
            <person name="Martiny A.C."/>
            <person name="Huang K."/>
            <person name="Zucker J."/>
            <person name="Coleman M.L."/>
            <person name="Rodrigue S."/>
            <person name="Chen F."/>
            <person name="Lapidus A."/>
            <person name="Ferriera S."/>
            <person name="Johnson J."/>
            <person name="Steglich C."/>
            <person name="Church G.M."/>
            <person name="Richardson P."/>
            <person name="Chisholm S.W."/>
        </authorList>
    </citation>
    <scope>NUCLEOTIDE SEQUENCE [LARGE SCALE GENOMIC DNA]</scope>
    <source>
        <strain>AS9601</strain>
    </source>
</reference>
<organism>
    <name type="scientific">Prochlorococcus marinus (strain AS9601)</name>
    <dbReference type="NCBI Taxonomy" id="146891"/>
    <lineage>
        <taxon>Bacteria</taxon>
        <taxon>Bacillati</taxon>
        <taxon>Cyanobacteriota</taxon>
        <taxon>Cyanophyceae</taxon>
        <taxon>Synechococcales</taxon>
        <taxon>Prochlorococcaceae</taxon>
        <taxon>Prochlorococcus</taxon>
    </lineage>
</organism>
<dbReference type="EC" id="1.2.1.38" evidence="1"/>
<dbReference type="EMBL" id="CP000551">
    <property type="protein sequence ID" value="ABM70253.1"/>
    <property type="molecule type" value="Genomic_DNA"/>
</dbReference>
<dbReference type="RefSeq" id="WP_011818408.1">
    <property type="nucleotide sequence ID" value="NC_008816.1"/>
</dbReference>
<dbReference type="SMR" id="A2BR42"/>
<dbReference type="STRING" id="146891.A9601_09691"/>
<dbReference type="KEGG" id="pmb:A9601_09691"/>
<dbReference type="eggNOG" id="COG0002">
    <property type="taxonomic scope" value="Bacteria"/>
</dbReference>
<dbReference type="HOGENOM" id="CLU_006384_0_1_3"/>
<dbReference type="OrthoDB" id="9801289at2"/>
<dbReference type="UniPathway" id="UPA00068">
    <property type="reaction ID" value="UER00108"/>
</dbReference>
<dbReference type="Proteomes" id="UP000002590">
    <property type="component" value="Chromosome"/>
</dbReference>
<dbReference type="GO" id="GO:0005737">
    <property type="term" value="C:cytoplasm"/>
    <property type="evidence" value="ECO:0007669"/>
    <property type="project" value="UniProtKB-SubCell"/>
</dbReference>
<dbReference type="GO" id="GO:0003942">
    <property type="term" value="F:N-acetyl-gamma-glutamyl-phosphate reductase activity"/>
    <property type="evidence" value="ECO:0007669"/>
    <property type="project" value="UniProtKB-UniRule"/>
</dbReference>
<dbReference type="GO" id="GO:0051287">
    <property type="term" value="F:NAD binding"/>
    <property type="evidence" value="ECO:0007669"/>
    <property type="project" value="InterPro"/>
</dbReference>
<dbReference type="GO" id="GO:0070401">
    <property type="term" value="F:NADP+ binding"/>
    <property type="evidence" value="ECO:0007669"/>
    <property type="project" value="InterPro"/>
</dbReference>
<dbReference type="GO" id="GO:0006526">
    <property type="term" value="P:L-arginine biosynthetic process"/>
    <property type="evidence" value="ECO:0007669"/>
    <property type="project" value="UniProtKB-UniRule"/>
</dbReference>
<dbReference type="CDD" id="cd23934">
    <property type="entry name" value="AGPR_1_C"/>
    <property type="match status" value="1"/>
</dbReference>
<dbReference type="CDD" id="cd17895">
    <property type="entry name" value="AGPR_1_N"/>
    <property type="match status" value="1"/>
</dbReference>
<dbReference type="Gene3D" id="3.30.360.10">
    <property type="entry name" value="Dihydrodipicolinate Reductase, domain 2"/>
    <property type="match status" value="1"/>
</dbReference>
<dbReference type="Gene3D" id="3.40.50.720">
    <property type="entry name" value="NAD(P)-binding Rossmann-like Domain"/>
    <property type="match status" value="1"/>
</dbReference>
<dbReference type="HAMAP" id="MF_00150">
    <property type="entry name" value="ArgC_type1"/>
    <property type="match status" value="1"/>
</dbReference>
<dbReference type="InterPro" id="IPR023013">
    <property type="entry name" value="AGPR_AS"/>
</dbReference>
<dbReference type="InterPro" id="IPR000706">
    <property type="entry name" value="AGPR_type-1"/>
</dbReference>
<dbReference type="InterPro" id="IPR036291">
    <property type="entry name" value="NAD(P)-bd_dom_sf"/>
</dbReference>
<dbReference type="InterPro" id="IPR050085">
    <property type="entry name" value="NAGSA_dehydrogenase"/>
</dbReference>
<dbReference type="InterPro" id="IPR000534">
    <property type="entry name" value="Semialdehyde_DH_NAD-bd"/>
</dbReference>
<dbReference type="NCBIfam" id="TIGR01850">
    <property type="entry name" value="argC"/>
    <property type="match status" value="1"/>
</dbReference>
<dbReference type="PANTHER" id="PTHR32338:SF10">
    <property type="entry name" value="N-ACETYL-GAMMA-GLUTAMYL-PHOSPHATE REDUCTASE, CHLOROPLASTIC-RELATED"/>
    <property type="match status" value="1"/>
</dbReference>
<dbReference type="PANTHER" id="PTHR32338">
    <property type="entry name" value="N-ACETYL-GAMMA-GLUTAMYL-PHOSPHATE REDUCTASE, CHLOROPLASTIC-RELATED-RELATED"/>
    <property type="match status" value="1"/>
</dbReference>
<dbReference type="Pfam" id="PF01118">
    <property type="entry name" value="Semialdhyde_dh"/>
    <property type="match status" value="1"/>
</dbReference>
<dbReference type="Pfam" id="PF22698">
    <property type="entry name" value="Semialdhyde_dhC_1"/>
    <property type="match status" value="1"/>
</dbReference>
<dbReference type="SMART" id="SM00859">
    <property type="entry name" value="Semialdhyde_dh"/>
    <property type="match status" value="1"/>
</dbReference>
<dbReference type="SUPFAM" id="SSF55347">
    <property type="entry name" value="Glyceraldehyde-3-phosphate dehydrogenase-like, C-terminal domain"/>
    <property type="match status" value="1"/>
</dbReference>
<dbReference type="SUPFAM" id="SSF51735">
    <property type="entry name" value="NAD(P)-binding Rossmann-fold domains"/>
    <property type="match status" value="1"/>
</dbReference>
<dbReference type="PROSITE" id="PS01224">
    <property type="entry name" value="ARGC"/>
    <property type="match status" value="1"/>
</dbReference>
<accession>A2BR42</accession>